<comment type="function">
    <text evidence="2">Synthesizes selenophosphate from selenide and ATP.</text>
</comment>
<comment type="catalytic activity">
    <reaction evidence="2">
        <text>hydrogenselenide + ATP + H2O = selenophosphate + AMP + phosphate + 2 H(+)</text>
        <dbReference type="Rhea" id="RHEA:18737"/>
        <dbReference type="ChEBI" id="CHEBI:15377"/>
        <dbReference type="ChEBI" id="CHEBI:15378"/>
        <dbReference type="ChEBI" id="CHEBI:16144"/>
        <dbReference type="ChEBI" id="CHEBI:29317"/>
        <dbReference type="ChEBI" id="CHEBI:30616"/>
        <dbReference type="ChEBI" id="CHEBI:43474"/>
        <dbReference type="ChEBI" id="CHEBI:456215"/>
        <dbReference type="EC" id="2.7.9.3"/>
    </reaction>
</comment>
<comment type="cofactor">
    <cofactor evidence="2">
        <name>Mg(2+)</name>
        <dbReference type="ChEBI" id="CHEBI:18420"/>
    </cofactor>
    <text evidence="2">Binds 1 Mg(2+) ion per subunit.</text>
</comment>
<comment type="subunit">
    <text evidence="2">Homodimer.</text>
</comment>
<comment type="PTM">
    <text evidence="3">Truncated SEPHS2 proteins produced by failed UGA/Sec decoding are ubiquitinated by the CRL2(KLHDC3) complex, which recognizes the glycine (Gly) at the C-terminus of truncated SEPHS2 proteins.</text>
</comment>
<comment type="similarity">
    <text evidence="6">Belongs to the selenophosphate synthase 1 family. Class I subfamily.</text>
</comment>
<protein>
    <recommendedName>
        <fullName>Selenide, water dikinase 2</fullName>
        <ecNumber evidence="2">2.7.9.3</ecNumber>
    </recommendedName>
    <alternativeName>
        <fullName>Selenium donor protein 2</fullName>
    </alternativeName>
    <alternativeName>
        <fullName>Selenophosphate synthase 2</fullName>
    </alternativeName>
</protein>
<name>SPS2_MOUSE</name>
<reference key="1">
    <citation type="journal article" date="1995" name="Development">
        <title>A new approach to the study of haematopoietic development in the yolk sac and embryoid bodies.</title>
        <authorList>
            <person name="Guimaraes M.J."/>
            <person name="Bazan J.F."/>
            <person name="Zlotnik A."/>
            <person name="Wiles M.V."/>
            <person name="Grimaldi J.C."/>
            <person name="Lee F."/>
            <person name="McClanahan T."/>
        </authorList>
    </citation>
    <scope>NUCLEOTIDE SEQUENCE [MRNA]</scope>
</reference>
<reference key="2">
    <citation type="journal article" date="1996" name="Proc. Natl. Acad. Sci. U.S.A.">
        <title>Identification of a novel selD homolog from eukaryotes, bacteria, and archaea: is there an autoregulatory mechanism in selenocysteine metabolism?</title>
        <authorList>
            <person name="Guimaraes M.J."/>
            <person name="Peterson D."/>
            <person name="Vicari A."/>
            <person name="Cocks B.G."/>
            <person name="Copeland N.G."/>
            <person name="Gilbert D.J."/>
            <person name="Jenkins N.A."/>
            <person name="Ferrick D.A."/>
            <person name="Kastelein R."/>
            <person name="Bazan J.F."/>
            <person name="Zlotnik A."/>
        </authorList>
    </citation>
    <scope>NUCLEOTIDE SEQUENCE [MRNA]</scope>
</reference>
<reference key="3">
    <citation type="journal article" date="2005" name="Science">
        <title>The transcriptional landscape of the mammalian genome.</title>
        <authorList>
            <person name="Carninci P."/>
            <person name="Kasukawa T."/>
            <person name="Katayama S."/>
            <person name="Gough J."/>
            <person name="Frith M.C."/>
            <person name="Maeda N."/>
            <person name="Oyama R."/>
            <person name="Ravasi T."/>
            <person name="Lenhard B."/>
            <person name="Wells C."/>
            <person name="Kodzius R."/>
            <person name="Shimokawa K."/>
            <person name="Bajic V.B."/>
            <person name="Brenner S.E."/>
            <person name="Batalov S."/>
            <person name="Forrest A.R."/>
            <person name="Zavolan M."/>
            <person name="Davis M.J."/>
            <person name="Wilming L.G."/>
            <person name="Aidinis V."/>
            <person name="Allen J.E."/>
            <person name="Ambesi-Impiombato A."/>
            <person name="Apweiler R."/>
            <person name="Aturaliya R.N."/>
            <person name="Bailey T.L."/>
            <person name="Bansal M."/>
            <person name="Baxter L."/>
            <person name="Beisel K.W."/>
            <person name="Bersano T."/>
            <person name="Bono H."/>
            <person name="Chalk A.M."/>
            <person name="Chiu K.P."/>
            <person name="Choudhary V."/>
            <person name="Christoffels A."/>
            <person name="Clutterbuck D.R."/>
            <person name="Crowe M.L."/>
            <person name="Dalla E."/>
            <person name="Dalrymple B.P."/>
            <person name="de Bono B."/>
            <person name="Della Gatta G."/>
            <person name="di Bernardo D."/>
            <person name="Down T."/>
            <person name="Engstrom P."/>
            <person name="Fagiolini M."/>
            <person name="Faulkner G."/>
            <person name="Fletcher C.F."/>
            <person name="Fukushima T."/>
            <person name="Furuno M."/>
            <person name="Futaki S."/>
            <person name="Gariboldi M."/>
            <person name="Georgii-Hemming P."/>
            <person name="Gingeras T.R."/>
            <person name="Gojobori T."/>
            <person name="Green R.E."/>
            <person name="Gustincich S."/>
            <person name="Harbers M."/>
            <person name="Hayashi Y."/>
            <person name="Hensch T.K."/>
            <person name="Hirokawa N."/>
            <person name="Hill D."/>
            <person name="Huminiecki L."/>
            <person name="Iacono M."/>
            <person name="Ikeo K."/>
            <person name="Iwama A."/>
            <person name="Ishikawa T."/>
            <person name="Jakt M."/>
            <person name="Kanapin A."/>
            <person name="Katoh M."/>
            <person name="Kawasawa Y."/>
            <person name="Kelso J."/>
            <person name="Kitamura H."/>
            <person name="Kitano H."/>
            <person name="Kollias G."/>
            <person name="Krishnan S.P."/>
            <person name="Kruger A."/>
            <person name="Kummerfeld S.K."/>
            <person name="Kurochkin I.V."/>
            <person name="Lareau L.F."/>
            <person name="Lazarevic D."/>
            <person name="Lipovich L."/>
            <person name="Liu J."/>
            <person name="Liuni S."/>
            <person name="McWilliam S."/>
            <person name="Madan Babu M."/>
            <person name="Madera M."/>
            <person name="Marchionni L."/>
            <person name="Matsuda H."/>
            <person name="Matsuzawa S."/>
            <person name="Miki H."/>
            <person name="Mignone F."/>
            <person name="Miyake S."/>
            <person name="Morris K."/>
            <person name="Mottagui-Tabar S."/>
            <person name="Mulder N."/>
            <person name="Nakano N."/>
            <person name="Nakauchi H."/>
            <person name="Ng P."/>
            <person name="Nilsson R."/>
            <person name="Nishiguchi S."/>
            <person name="Nishikawa S."/>
            <person name="Nori F."/>
            <person name="Ohara O."/>
            <person name="Okazaki Y."/>
            <person name="Orlando V."/>
            <person name="Pang K.C."/>
            <person name="Pavan W.J."/>
            <person name="Pavesi G."/>
            <person name="Pesole G."/>
            <person name="Petrovsky N."/>
            <person name="Piazza S."/>
            <person name="Reed J."/>
            <person name="Reid J.F."/>
            <person name="Ring B.Z."/>
            <person name="Ringwald M."/>
            <person name="Rost B."/>
            <person name="Ruan Y."/>
            <person name="Salzberg S.L."/>
            <person name="Sandelin A."/>
            <person name="Schneider C."/>
            <person name="Schoenbach C."/>
            <person name="Sekiguchi K."/>
            <person name="Semple C.A."/>
            <person name="Seno S."/>
            <person name="Sessa L."/>
            <person name="Sheng Y."/>
            <person name="Shibata Y."/>
            <person name="Shimada H."/>
            <person name="Shimada K."/>
            <person name="Silva D."/>
            <person name="Sinclair B."/>
            <person name="Sperling S."/>
            <person name="Stupka E."/>
            <person name="Sugiura K."/>
            <person name="Sultana R."/>
            <person name="Takenaka Y."/>
            <person name="Taki K."/>
            <person name="Tammoja K."/>
            <person name="Tan S.L."/>
            <person name="Tang S."/>
            <person name="Taylor M.S."/>
            <person name="Tegner J."/>
            <person name="Teichmann S.A."/>
            <person name="Ueda H.R."/>
            <person name="van Nimwegen E."/>
            <person name="Verardo R."/>
            <person name="Wei C.L."/>
            <person name="Yagi K."/>
            <person name="Yamanishi H."/>
            <person name="Zabarovsky E."/>
            <person name="Zhu S."/>
            <person name="Zimmer A."/>
            <person name="Hide W."/>
            <person name="Bult C."/>
            <person name="Grimmond S.M."/>
            <person name="Teasdale R.D."/>
            <person name="Liu E.T."/>
            <person name="Brusic V."/>
            <person name="Quackenbush J."/>
            <person name="Wahlestedt C."/>
            <person name="Mattick J.S."/>
            <person name="Hume D.A."/>
            <person name="Kai C."/>
            <person name="Sasaki D."/>
            <person name="Tomaru Y."/>
            <person name="Fukuda S."/>
            <person name="Kanamori-Katayama M."/>
            <person name="Suzuki M."/>
            <person name="Aoki J."/>
            <person name="Arakawa T."/>
            <person name="Iida J."/>
            <person name="Imamura K."/>
            <person name="Itoh M."/>
            <person name="Kato T."/>
            <person name="Kawaji H."/>
            <person name="Kawagashira N."/>
            <person name="Kawashima T."/>
            <person name="Kojima M."/>
            <person name="Kondo S."/>
            <person name="Konno H."/>
            <person name="Nakano K."/>
            <person name="Ninomiya N."/>
            <person name="Nishio T."/>
            <person name="Okada M."/>
            <person name="Plessy C."/>
            <person name="Shibata K."/>
            <person name="Shiraki T."/>
            <person name="Suzuki S."/>
            <person name="Tagami M."/>
            <person name="Waki K."/>
            <person name="Watahiki A."/>
            <person name="Okamura-Oho Y."/>
            <person name="Suzuki H."/>
            <person name="Kawai J."/>
            <person name="Hayashizaki Y."/>
        </authorList>
    </citation>
    <scope>NUCLEOTIDE SEQUENCE [LARGE SCALE MRNA]</scope>
    <source>
        <strain>C57BL/6J</strain>
        <tissue>Amnion</tissue>
        <tissue>Kidney</tissue>
        <tissue>Liver</tissue>
    </source>
</reference>
<reference key="4">
    <citation type="journal article" date="2004" name="Genome Res.">
        <title>The status, quality, and expansion of the NIH full-length cDNA project: the Mammalian Gene Collection (MGC).</title>
        <authorList>
            <consortium name="The MGC Project Team"/>
        </authorList>
    </citation>
    <scope>NUCLEOTIDE SEQUENCE [LARGE SCALE MRNA]</scope>
    <source>
        <strain>FVB/N</strain>
        <tissue>Liver</tissue>
        <tissue>Salivary gland</tissue>
    </source>
</reference>
<reference key="5">
    <citation type="submission" date="2009-01" db="UniProtKB">
        <authorList>
            <person name="Lubec G."/>
            <person name="Sunyer B."/>
            <person name="Chen W.-Q."/>
        </authorList>
    </citation>
    <scope>PROTEIN SEQUENCE OF 353-362</scope>
    <scope>IDENTIFICATION BY MASS SPECTROMETRY</scope>
    <source>
        <strain>OF1</strain>
        <tissue>Hippocampus</tissue>
    </source>
</reference>
<reference key="6">
    <citation type="journal article" date="2010" name="Cell">
        <title>A tissue-specific atlas of mouse protein phosphorylation and expression.</title>
        <authorList>
            <person name="Huttlin E.L."/>
            <person name="Jedrychowski M.P."/>
            <person name="Elias J.E."/>
            <person name="Goswami T."/>
            <person name="Rad R."/>
            <person name="Beausoleil S.A."/>
            <person name="Villen J."/>
            <person name="Haas W."/>
            <person name="Sowa M.E."/>
            <person name="Gygi S.P."/>
        </authorList>
    </citation>
    <scope>PHOSPHORYLATION [LARGE SCALE ANALYSIS] AT SER-49</scope>
    <scope>IDENTIFICATION BY MASS SPECTROMETRY [LARGE SCALE ANALYSIS]</scope>
    <source>
        <tissue>Brain</tissue>
        <tissue>Brown adipose tissue</tissue>
        <tissue>Heart</tissue>
        <tissue>Kidney</tissue>
        <tissue>Liver</tissue>
        <tissue>Pancreas</tissue>
        <tissue>Spleen</tissue>
        <tissue>Testis</tissue>
    </source>
</reference>
<feature type="initiator methionine" description="Removed" evidence="3">
    <location>
        <position position="1"/>
    </location>
</feature>
<feature type="chain" id="PRO_0000127651" description="Selenide, water dikinase 2">
    <location>
        <begin position="2"/>
        <end position="452"/>
    </location>
</feature>
<feature type="region of interest" description="Disordered" evidence="5">
    <location>
        <begin position="86"/>
        <end position="111"/>
    </location>
</feature>
<feature type="compositionally biased region" description="Low complexity" evidence="5">
    <location>
        <begin position="95"/>
        <end position="105"/>
    </location>
</feature>
<feature type="active site" evidence="4">
    <location>
        <position position="63"/>
    </location>
</feature>
<feature type="binding site" description="in other chain" evidence="2">
    <location>
        <position position="66"/>
    </location>
    <ligand>
        <name>ATP</name>
        <dbReference type="ChEBI" id="CHEBI:30616"/>
        <note>ligand shared between dimeric partners</note>
    </ligand>
</feature>
<feature type="binding site" description="in other chain" evidence="2">
    <location>
        <begin position="121"/>
        <end position="123"/>
    </location>
    <ligand>
        <name>ATP</name>
        <dbReference type="ChEBI" id="CHEBI:30616"/>
        <note>ligand shared between dimeric partners</note>
    </ligand>
</feature>
<feature type="binding site" evidence="2">
    <location>
        <position position="123"/>
    </location>
    <ligand>
        <name>Mg(2+)</name>
        <dbReference type="ChEBI" id="CHEBI:18420"/>
    </ligand>
</feature>
<feature type="binding site" description="in other chain" evidence="2">
    <location>
        <position position="141"/>
    </location>
    <ligand>
        <name>ATP</name>
        <dbReference type="ChEBI" id="CHEBI:30616"/>
        <note>ligand shared between dimeric partners</note>
    </ligand>
</feature>
<feature type="binding site" description="in other chain" evidence="2">
    <location>
        <position position="164"/>
    </location>
    <ligand>
        <name>ATP</name>
        <dbReference type="ChEBI" id="CHEBI:30616"/>
        <note>ligand shared between dimeric partners</note>
    </ligand>
</feature>
<feature type="binding site" evidence="2">
    <location>
        <position position="164"/>
    </location>
    <ligand>
        <name>Mg(2+)</name>
        <dbReference type="ChEBI" id="CHEBI:18420"/>
    </ligand>
</feature>
<feature type="binding site" evidence="2">
    <location>
        <begin position="215"/>
        <end position="218"/>
    </location>
    <ligand>
        <name>ATP</name>
        <dbReference type="ChEBI" id="CHEBI:30616"/>
        <note>ligand shared between dimeric partners</note>
    </ligand>
</feature>
<feature type="binding site" evidence="2">
    <location>
        <position position="319"/>
    </location>
    <ligand>
        <name>Mg(2+)</name>
        <dbReference type="ChEBI" id="CHEBI:18420"/>
    </ligand>
</feature>
<feature type="site" description="Important for catalytic activity" evidence="1">
    <location>
        <position position="66"/>
    </location>
</feature>
<feature type="non-standard amino acid" description="Selenocysteine">
    <location>
        <position position="63"/>
    </location>
</feature>
<feature type="modified residue" description="N-acetylalanine" evidence="3">
    <location>
        <position position="2"/>
    </location>
</feature>
<feature type="modified residue" description="Phosphoserine" evidence="7">
    <location>
        <position position="49"/>
    </location>
</feature>
<organism>
    <name type="scientific">Mus musculus</name>
    <name type="common">Mouse</name>
    <dbReference type="NCBI Taxonomy" id="10090"/>
    <lineage>
        <taxon>Eukaryota</taxon>
        <taxon>Metazoa</taxon>
        <taxon>Chordata</taxon>
        <taxon>Craniata</taxon>
        <taxon>Vertebrata</taxon>
        <taxon>Euteleostomi</taxon>
        <taxon>Mammalia</taxon>
        <taxon>Eutheria</taxon>
        <taxon>Euarchontoglires</taxon>
        <taxon>Glires</taxon>
        <taxon>Rodentia</taxon>
        <taxon>Myomorpha</taxon>
        <taxon>Muroidea</taxon>
        <taxon>Muridae</taxon>
        <taxon>Murinae</taxon>
        <taxon>Mus</taxon>
        <taxon>Mus</taxon>
    </lineage>
</organism>
<proteinExistence type="evidence at protein level"/>
<accession>P97364</accession>
<accession>Q3TGI4</accession>
<accession>Q80ZY9</accession>
<dbReference type="EC" id="2.7.9.3" evidence="2"/>
<dbReference type="EMBL" id="U43285">
    <property type="protein sequence ID" value="AAC53024.2"/>
    <property type="molecule type" value="mRNA"/>
</dbReference>
<dbReference type="EMBL" id="AK149516">
    <property type="protein sequence ID" value="BAE28931.1"/>
    <property type="molecule type" value="mRNA"/>
</dbReference>
<dbReference type="EMBL" id="AK168722">
    <property type="protein sequence ID" value="BAE40564.1"/>
    <property type="molecule type" value="mRNA"/>
</dbReference>
<dbReference type="EMBL" id="AK168965">
    <property type="protein sequence ID" value="BAE40770.1"/>
    <property type="molecule type" value="mRNA"/>
</dbReference>
<dbReference type="EMBL" id="BC016508">
    <property type="protein sequence ID" value="AAH16508.1"/>
    <property type="molecule type" value="mRNA"/>
</dbReference>
<dbReference type="EMBL" id="BC028966">
    <property type="protein sequence ID" value="AAH28966.1"/>
    <property type="molecule type" value="mRNA"/>
</dbReference>
<dbReference type="EMBL" id="BC043334">
    <property type="protein sequence ID" value="AAH43334.2"/>
    <property type="molecule type" value="mRNA"/>
</dbReference>
<dbReference type="CCDS" id="CCDS21863.1"/>
<dbReference type="RefSeq" id="NP_033292.2">
    <property type="nucleotide sequence ID" value="NM_009266.3"/>
</dbReference>
<dbReference type="BioGRID" id="203484">
    <property type="interactions" value="1"/>
</dbReference>
<dbReference type="FunCoup" id="P97364">
    <property type="interactions" value="234"/>
</dbReference>
<dbReference type="STRING" id="10090.ENSMUSP00000081009"/>
<dbReference type="iPTMnet" id="P97364"/>
<dbReference type="PhosphoSitePlus" id="P97364"/>
<dbReference type="SwissPalm" id="P97364"/>
<dbReference type="REPRODUCTION-2DPAGE" id="IPI00124181"/>
<dbReference type="jPOST" id="P97364"/>
<dbReference type="PaxDb" id="10090-ENSMUSP00000081009"/>
<dbReference type="PeptideAtlas" id="P97364"/>
<dbReference type="ProteomicsDB" id="261633"/>
<dbReference type="Pumba" id="P97364"/>
<dbReference type="Antibodypedia" id="43619">
    <property type="antibodies" value="112 antibodies from 21 providers"/>
</dbReference>
<dbReference type="DNASU" id="20768"/>
<dbReference type="Ensembl" id="ENSMUST00000082428.6">
    <property type="protein sequence ID" value="ENSMUSP00000081009.5"/>
    <property type="gene ID" value="ENSMUSG00000049091.8"/>
</dbReference>
<dbReference type="GeneID" id="20768"/>
<dbReference type="KEGG" id="mmu:20768"/>
<dbReference type="UCSC" id="uc009jux.2">
    <property type="organism name" value="mouse"/>
</dbReference>
<dbReference type="AGR" id="MGI:108388"/>
<dbReference type="CTD" id="22928"/>
<dbReference type="MGI" id="MGI:108388">
    <property type="gene designation" value="Sephs2"/>
</dbReference>
<dbReference type="VEuPathDB" id="HostDB:ENSMUSG00000049091"/>
<dbReference type="eggNOG" id="KOG3939">
    <property type="taxonomic scope" value="Eukaryota"/>
</dbReference>
<dbReference type="GeneTree" id="ENSGT00390000000950"/>
<dbReference type="HOGENOM" id="CLU_032859_1_0_1"/>
<dbReference type="InParanoid" id="P97364"/>
<dbReference type="OMA" id="RWNKINM"/>
<dbReference type="OrthoDB" id="409395at2759"/>
<dbReference type="PhylomeDB" id="P97364"/>
<dbReference type="TreeFam" id="TF313811"/>
<dbReference type="BioCyc" id="MetaCyc:MONOMER-14949"/>
<dbReference type="BRENDA" id="2.7.9.3">
    <property type="organism ID" value="3474"/>
</dbReference>
<dbReference type="Reactome" id="R-MMU-2408557">
    <property type="pathway name" value="Selenocysteine synthesis"/>
</dbReference>
<dbReference type="BioGRID-ORCS" id="20768">
    <property type="hits" value="23 hits in 78 CRISPR screens"/>
</dbReference>
<dbReference type="ChiTaRS" id="Sephs2">
    <property type="organism name" value="mouse"/>
</dbReference>
<dbReference type="PRO" id="PR:P97364"/>
<dbReference type="Proteomes" id="UP000000589">
    <property type="component" value="Chromosome 7"/>
</dbReference>
<dbReference type="RNAct" id="P97364">
    <property type="molecule type" value="protein"/>
</dbReference>
<dbReference type="Bgee" id="ENSMUSG00000049091">
    <property type="expression patterns" value="Expressed in left lobe of liver and 269 other cell types or tissues"/>
</dbReference>
<dbReference type="GO" id="GO:0005524">
    <property type="term" value="F:ATP binding"/>
    <property type="evidence" value="ECO:0007669"/>
    <property type="project" value="UniProtKB-KW"/>
</dbReference>
<dbReference type="GO" id="GO:0046872">
    <property type="term" value="F:metal ion binding"/>
    <property type="evidence" value="ECO:0007669"/>
    <property type="project" value="UniProtKB-KW"/>
</dbReference>
<dbReference type="GO" id="GO:0004756">
    <property type="term" value="F:selenide, water dikinase activity"/>
    <property type="evidence" value="ECO:0000314"/>
    <property type="project" value="MGI"/>
</dbReference>
<dbReference type="GO" id="GO:0001887">
    <property type="term" value="P:selenium compound metabolic process"/>
    <property type="evidence" value="ECO:0000314"/>
    <property type="project" value="MGI"/>
</dbReference>
<dbReference type="GO" id="GO:0016260">
    <property type="term" value="P:selenocysteine biosynthetic process"/>
    <property type="evidence" value="ECO:0000315"/>
    <property type="project" value="MGI"/>
</dbReference>
<dbReference type="CDD" id="cd02195">
    <property type="entry name" value="SelD"/>
    <property type="match status" value="1"/>
</dbReference>
<dbReference type="FunFam" id="3.90.650.10:FF:000003">
    <property type="entry name" value="Selenide, water dikinase 1"/>
    <property type="match status" value="1"/>
</dbReference>
<dbReference type="FunFam" id="3.30.1330.10:FF:000018">
    <property type="entry name" value="selenide, water dikinase 2"/>
    <property type="match status" value="1"/>
</dbReference>
<dbReference type="Gene3D" id="3.90.650.10">
    <property type="entry name" value="PurM-like C-terminal domain"/>
    <property type="match status" value="1"/>
</dbReference>
<dbReference type="Gene3D" id="3.30.1330.10">
    <property type="entry name" value="PurM-like, N-terminal domain"/>
    <property type="match status" value="1"/>
</dbReference>
<dbReference type="InterPro" id="IPR010918">
    <property type="entry name" value="PurM-like_C_dom"/>
</dbReference>
<dbReference type="InterPro" id="IPR036676">
    <property type="entry name" value="PurM-like_C_sf"/>
</dbReference>
<dbReference type="InterPro" id="IPR016188">
    <property type="entry name" value="PurM-like_N"/>
</dbReference>
<dbReference type="InterPro" id="IPR036921">
    <property type="entry name" value="PurM-like_N_sf"/>
</dbReference>
<dbReference type="InterPro" id="IPR004536">
    <property type="entry name" value="SPS/SelD"/>
</dbReference>
<dbReference type="NCBIfam" id="TIGR00476">
    <property type="entry name" value="selD"/>
    <property type="match status" value="1"/>
</dbReference>
<dbReference type="PANTHER" id="PTHR10256">
    <property type="entry name" value="SELENIDE, WATER DIKINASE"/>
    <property type="match status" value="1"/>
</dbReference>
<dbReference type="PANTHER" id="PTHR10256:SF1">
    <property type="entry name" value="SELENIDE, WATER DIKINASE 2"/>
    <property type="match status" value="1"/>
</dbReference>
<dbReference type="Pfam" id="PF00586">
    <property type="entry name" value="AIRS"/>
    <property type="match status" value="1"/>
</dbReference>
<dbReference type="Pfam" id="PF02769">
    <property type="entry name" value="AIRS_C"/>
    <property type="match status" value="1"/>
</dbReference>
<dbReference type="SUPFAM" id="SSF56042">
    <property type="entry name" value="PurM C-terminal domain-like"/>
    <property type="match status" value="1"/>
</dbReference>
<dbReference type="SUPFAM" id="SSF55326">
    <property type="entry name" value="PurM N-terminal domain-like"/>
    <property type="match status" value="1"/>
</dbReference>
<gene>
    <name type="primary">Sephs2</name>
    <name type="synonym">Sps2</name>
</gene>
<keyword id="KW-0007">Acetylation</keyword>
<keyword id="KW-0067">ATP-binding</keyword>
<keyword id="KW-0903">Direct protein sequencing</keyword>
<keyword id="KW-0418">Kinase</keyword>
<keyword id="KW-0460">Magnesium</keyword>
<keyword id="KW-0479">Metal-binding</keyword>
<keyword id="KW-0547">Nucleotide-binding</keyword>
<keyword id="KW-0597">Phosphoprotein</keyword>
<keyword id="KW-1185">Reference proteome</keyword>
<keyword id="KW-0711">Selenium</keyword>
<keyword id="KW-0712">Selenocysteine</keyword>
<keyword id="KW-0808">Transferase</keyword>
<keyword id="KW-0832">Ubl conjugation</keyword>
<evidence type="ECO:0000250" key="1">
    <source>
        <dbReference type="UniProtKB" id="P16456"/>
    </source>
</evidence>
<evidence type="ECO:0000250" key="2">
    <source>
        <dbReference type="UniProtKB" id="P49903"/>
    </source>
</evidence>
<evidence type="ECO:0000250" key="3">
    <source>
        <dbReference type="UniProtKB" id="Q99611"/>
    </source>
</evidence>
<evidence type="ECO:0000255" key="4"/>
<evidence type="ECO:0000256" key="5">
    <source>
        <dbReference type="SAM" id="MobiDB-lite"/>
    </source>
</evidence>
<evidence type="ECO:0000305" key="6"/>
<evidence type="ECO:0007744" key="7">
    <source>
    </source>
</evidence>
<sequence length="452" mass="47834">MAEAAAAGASGETMAALVAAEGSLGPAGWSAGRSFSNYRPFEPQTLGFSPSWRLTSFSGMKGUGCKVPQETLLKLLEGLTRPALQPPLTSGLVGGQEETVQEGGLSTRPGPGSAFPSLSIGMDSCVIPLRHGGLSLVQTTDFFYPLVEDPYMMGRIACANVLSDLYAMGITECDNMLMLLSVSQSMSEKEREKVTPLMIKGFRDAAEEGGTAVTGGQTVVNPWIIIGGVATVVCQQNEFIMPDSAVVGDVLVLTKPLGTQVAANAHQWLDNPEKWNKIKMVVSREEVELAYQEAMFNMATLNRTAAGLMHTFNAHAATDITGFGILGHSQNLAKQQKNEVSFVIHNLPIIAKMAAISKASGRFGLLQGTSAETSGGLLICLPREQAARFCSEIKSSKYGEGHQAWIVGIVEKGNRTARIIDKPRVIEVLPRGASAAAAAAPDNSNAASEPSS</sequence>